<name>RECA_MYCSK</name>
<comment type="function">
    <text evidence="1">Can catalyze the hydrolysis of ATP in the presence of single-stranded DNA, the ATP-dependent uptake of single-stranded DNA by duplex DNA, and the ATP-dependent hybridization of homologous single-stranded DNAs. It interacts with LexA causing its activation and leading to its autocatalytic cleavage.</text>
</comment>
<comment type="subcellular location">
    <subcellularLocation>
        <location evidence="1">Cytoplasm</location>
    </subcellularLocation>
</comment>
<comment type="similarity">
    <text evidence="1">Belongs to the RecA family.</text>
</comment>
<protein>
    <recommendedName>
        <fullName evidence="1">Protein RecA</fullName>
    </recommendedName>
    <alternativeName>
        <fullName evidence="1">Recombinase A</fullName>
    </alternativeName>
</protein>
<dbReference type="EMBL" id="CP000518">
    <property type="protein sequence ID" value="ABL91391.1"/>
    <property type="molecule type" value="Genomic_DNA"/>
</dbReference>
<dbReference type="SMR" id="A1UEY3"/>
<dbReference type="STRING" id="189918.Mkms_2193"/>
<dbReference type="KEGG" id="mkm:Mkms_2193"/>
<dbReference type="HOGENOM" id="CLU_040469_1_2_11"/>
<dbReference type="OrthoDB" id="9776733at2"/>
<dbReference type="GO" id="GO:0005829">
    <property type="term" value="C:cytosol"/>
    <property type="evidence" value="ECO:0007669"/>
    <property type="project" value="TreeGrafter"/>
</dbReference>
<dbReference type="GO" id="GO:0005524">
    <property type="term" value="F:ATP binding"/>
    <property type="evidence" value="ECO:0007669"/>
    <property type="project" value="UniProtKB-UniRule"/>
</dbReference>
<dbReference type="GO" id="GO:0016887">
    <property type="term" value="F:ATP hydrolysis activity"/>
    <property type="evidence" value="ECO:0007669"/>
    <property type="project" value="InterPro"/>
</dbReference>
<dbReference type="GO" id="GO:0140664">
    <property type="term" value="F:ATP-dependent DNA damage sensor activity"/>
    <property type="evidence" value="ECO:0007669"/>
    <property type="project" value="InterPro"/>
</dbReference>
<dbReference type="GO" id="GO:0003684">
    <property type="term" value="F:damaged DNA binding"/>
    <property type="evidence" value="ECO:0007669"/>
    <property type="project" value="UniProtKB-UniRule"/>
</dbReference>
<dbReference type="GO" id="GO:0003697">
    <property type="term" value="F:single-stranded DNA binding"/>
    <property type="evidence" value="ECO:0007669"/>
    <property type="project" value="UniProtKB-UniRule"/>
</dbReference>
<dbReference type="GO" id="GO:0006310">
    <property type="term" value="P:DNA recombination"/>
    <property type="evidence" value="ECO:0007669"/>
    <property type="project" value="UniProtKB-UniRule"/>
</dbReference>
<dbReference type="GO" id="GO:0006281">
    <property type="term" value="P:DNA repair"/>
    <property type="evidence" value="ECO:0007669"/>
    <property type="project" value="UniProtKB-UniRule"/>
</dbReference>
<dbReference type="GO" id="GO:0009432">
    <property type="term" value="P:SOS response"/>
    <property type="evidence" value="ECO:0007669"/>
    <property type="project" value="UniProtKB-UniRule"/>
</dbReference>
<dbReference type="CDD" id="cd00983">
    <property type="entry name" value="RecA"/>
    <property type="match status" value="1"/>
</dbReference>
<dbReference type="FunFam" id="3.40.50.300:FF:002436">
    <property type="entry name" value="Protein RecA"/>
    <property type="match status" value="1"/>
</dbReference>
<dbReference type="Gene3D" id="3.40.50.300">
    <property type="entry name" value="P-loop containing nucleotide triphosphate hydrolases"/>
    <property type="match status" value="1"/>
</dbReference>
<dbReference type="HAMAP" id="MF_00268">
    <property type="entry name" value="RecA"/>
    <property type="match status" value="1"/>
</dbReference>
<dbReference type="InterPro" id="IPR003593">
    <property type="entry name" value="AAA+_ATPase"/>
</dbReference>
<dbReference type="InterPro" id="IPR013765">
    <property type="entry name" value="DNA_recomb/repair_RecA"/>
</dbReference>
<dbReference type="InterPro" id="IPR020584">
    <property type="entry name" value="DNA_recomb/repair_RecA_CS"/>
</dbReference>
<dbReference type="InterPro" id="IPR027417">
    <property type="entry name" value="P-loop_NTPase"/>
</dbReference>
<dbReference type="InterPro" id="IPR049261">
    <property type="entry name" value="RecA-like_C"/>
</dbReference>
<dbReference type="InterPro" id="IPR049428">
    <property type="entry name" value="RecA-like_N"/>
</dbReference>
<dbReference type="InterPro" id="IPR020588">
    <property type="entry name" value="RecA_ATP-bd"/>
</dbReference>
<dbReference type="InterPro" id="IPR023400">
    <property type="entry name" value="RecA_C_sf"/>
</dbReference>
<dbReference type="InterPro" id="IPR020587">
    <property type="entry name" value="RecA_monomer-monomer_interface"/>
</dbReference>
<dbReference type="NCBIfam" id="TIGR02012">
    <property type="entry name" value="tigrfam_recA"/>
    <property type="match status" value="1"/>
</dbReference>
<dbReference type="PANTHER" id="PTHR45900:SF1">
    <property type="entry name" value="MITOCHONDRIAL DNA REPAIR PROTEIN RECA HOMOLOG-RELATED"/>
    <property type="match status" value="1"/>
</dbReference>
<dbReference type="PANTHER" id="PTHR45900">
    <property type="entry name" value="RECA"/>
    <property type="match status" value="1"/>
</dbReference>
<dbReference type="Pfam" id="PF00154">
    <property type="entry name" value="RecA"/>
    <property type="match status" value="1"/>
</dbReference>
<dbReference type="Pfam" id="PF21096">
    <property type="entry name" value="RecA_C"/>
    <property type="match status" value="1"/>
</dbReference>
<dbReference type="PRINTS" id="PR00142">
    <property type="entry name" value="RECA"/>
</dbReference>
<dbReference type="SMART" id="SM00382">
    <property type="entry name" value="AAA"/>
    <property type="match status" value="1"/>
</dbReference>
<dbReference type="SUPFAM" id="SSF52540">
    <property type="entry name" value="P-loop containing nucleoside triphosphate hydrolases"/>
    <property type="match status" value="1"/>
</dbReference>
<dbReference type="SUPFAM" id="SSF54752">
    <property type="entry name" value="RecA protein, C-terminal domain"/>
    <property type="match status" value="1"/>
</dbReference>
<dbReference type="PROSITE" id="PS00321">
    <property type="entry name" value="RECA_1"/>
    <property type="match status" value="1"/>
</dbReference>
<dbReference type="PROSITE" id="PS50162">
    <property type="entry name" value="RECA_2"/>
    <property type="match status" value="1"/>
</dbReference>
<dbReference type="PROSITE" id="PS50163">
    <property type="entry name" value="RECA_3"/>
    <property type="match status" value="1"/>
</dbReference>
<proteinExistence type="inferred from homology"/>
<evidence type="ECO:0000255" key="1">
    <source>
        <dbReference type="HAMAP-Rule" id="MF_00268"/>
    </source>
</evidence>
<organism>
    <name type="scientific">Mycobacterium sp. (strain KMS)</name>
    <dbReference type="NCBI Taxonomy" id="189918"/>
    <lineage>
        <taxon>Bacteria</taxon>
        <taxon>Bacillati</taxon>
        <taxon>Actinomycetota</taxon>
        <taxon>Actinomycetes</taxon>
        <taxon>Mycobacteriales</taxon>
        <taxon>Mycobacteriaceae</taxon>
        <taxon>Mycobacterium</taxon>
    </lineage>
</organism>
<sequence>MAPQAPDREKALELALAQIEKSHGKGSVMRLGDEVRAPISVIPTGSIALDVALGIGGLPRGRVIEIYGPESSGKTTVALHAVANAQAAGGIAAFIDAEHALDPDYAKKLGVDTDSLLVSQPDTGEQALEIADMLIRSGALDILVIDSVAALVPRAEIEGEMGDSHVGLQARLMSQALRKITGALSNSGTTAIFINQLREKIGVMFGSPETTTGGKALKFYASVRMDVRRIETLKDGTDAVGNRTRVKIVKNKVSPPFKQAEFDILYGKGISKEGSLIDMGVEHGFIRKSGSWFTYEGEQLGQGKENARKFLLENGDVANEIEKKIKEKLNIGAVVTADDVLPAPVDF</sequence>
<feature type="chain" id="PRO_1000078672" description="Protein RecA">
    <location>
        <begin position="1"/>
        <end position="347"/>
    </location>
</feature>
<feature type="binding site" evidence="1">
    <location>
        <begin position="68"/>
        <end position="75"/>
    </location>
    <ligand>
        <name>ATP</name>
        <dbReference type="ChEBI" id="CHEBI:30616"/>
    </ligand>
</feature>
<gene>
    <name evidence="1" type="primary">recA</name>
    <name type="ordered locus">Mkms_2193</name>
</gene>
<accession>A1UEY3</accession>
<reference key="1">
    <citation type="submission" date="2006-12" db="EMBL/GenBank/DDBJ databases">
        <title>Complete sequence of chromosome of Mycobacterium sp. KMS.</title>
        <authorList>
            <consortium name="US DOE Joint Genome Institute"/>
            <person name="Copeland A."/>
            <person name="Lucas S."/>
            <person name="Lapidus A."/>
            <person name="Barry K."/>
            <person name="Detter J.C."/>
            <person name="Glavina del Rio T."/>
            <person name="Hammon N."/>
            <person name="Israni S."/>
            <person name="Dalin E."/>
            <person name="Tice H."/>
            <person name="Pitluck S."/>
            <person name="Kiss H."/>
            <person name="Brettin T."/>
            <person name="Bruce D."/>
            <person name="Han C."/>
            <person name="Tapia R."/>
            <person name="Gilna P."/>
            <person name="Schmutz J."/>
            <person name="Larimer F."/>
            <person name="Land M."/>
            <person name="Hauser L."/>
            <person name="Kyrpides N."/>
            <person name="Mikhailova N."/>
            <person name="Miller C.D."/>
            <person name="Richardson P."/>
        </authorList>
    </citation>
    <scope>NUCLEOTIDE SEQUENCE [LARGE SCALE GENOMIC DNA]</scope>
    <source>
        <strain>KMS</strain>
    </source>
</reference>
<keyword id="KW-0067">ATP-binding</keyword>
<keyword id="KW-0963">Cytoplasm</keyword>
<keyword id="KW-0227">DNA damage</keyword>
<keyword id="KW-0233">DNA recombination</keyword>
<keyword id="KW-0234">DNA repair</keyword>
<keyword id="KW-0238">DNA-binding</keyword>
<keyword id="KW-0547">Nucleotide-binding</keyword>
<keyword id="KW-0742">SOS response</keyword>